<feature type="chain" id="PRO_0000167931" description="Small ribosomal subunit protein bS20">
    <location>
        <begin position="1"/>
        <end position="88"/>
    </location>
</feature>
<name>RS20_BRADU</name>
<gene>
    <name evidence="1" type="primary">rpsT</name>
    <name type="ordered locus">bsl0832</name>
</gene>
<keyword id="KW-1185">Reference proteome</keyword>
<keyword id="KW-0687">Ribonucleoprotein</keyword>
<keyword id="KW-0689">Ribosomal protein</keyword>
<keyword id="KW-0694">RNA-binding</keyword>
<keyword id="KW-0699">rRNA-binding</keyword>
<dbReference type="EMBL" id="BA000040">
    <property type="protein sequence ID" value="BAC46097.1"/>
    <property type="molecule type" value="Genomic_DNA"/>
</dbReference>
<dbReference type="RefSeq" id="NP_767472.1">
    <property type="nucleotide sequence ID" value="NC_004463.1"/>
</dbReference>
<dbReference type="RefSeq" id="WP_011083654.1">
    <property type="nucleotide sequence ID" value="NZ_CP011360.1"/>
</dbReference>
<dbReference type="SMR" id="Q89W61"/>
<dbReference type="FunCoup" id="Q89W61">
    <property type="interactions" value="670"/>
</dbReference>
<dbReference type="STRING" id="224911.AAV28_00995"/>
<dbReference type="EnsemblBacteria" id="BAC46097">
    <property type="protein sequence ID" value="BAC46097"/>
    <property type="gene ID" value="BAC46097"/>
</dbReference>
<dbReference type="GeneID" id="46488104"/>
<dbReference type="KEGG" id="bja:bsl0832"/>
<dbReference type="PATRIC" id="fig|224911.44.peg.208"/>
<dbReference type="eggNOG" id="COG0268">
    <property type="taxonomic scope" value="Bacteria"/>
</dbReference>
<dbReference type="HOGENOM" id="CLU_160655_3_0_5"/>
<dbReference type="InParanoid" id="Q89W61"/>
<dbReference type="OrthoDB" id="9807974at2"/>
<dbReference type="PhylomeDB" id="Q89W61"/>
<dbReference type="Proteomes" id="UP000002526">
    <property type="component" value="Chromosome"/>
</dbReference>
<dbReference type="GO" id="GO:0005829">
    <property type="term" value="C:cytosol"/>
    <property type="evidence" value="ECO:0000318"/>
    <property type="project" value="GO_Central"/>
</dbReference>
<dbReference type="GO" id="GO:0015935">
    <property type="term" value="C:small ribosomal subunit"/>
    <property type="evidence" value="ECO:0000318"/>
    <property type="project" value="GO_Central"/>
</dbReference>
<dbReference type="GO" id="GO:0070181">
    <property type="term" value="F:small ribosomal subunit rRNA binding"/>
    <property type="evidence" value="ECO:0000318"/>
    <property type="project" value="GO_Central"/>
</dbReference>
<dbReference type="GO" id="GO:0003735">
    <property type="term" value="F:structural constituent of ribosome"/>
    <property type="evidence" value="ECO:0007669"/>
    <property type="project" value="InterPro"/>
</dbReference>
<dbReference type="GO" id="GO:0006412">
    <property type="term" value="P:translation"/>
    <property type="evidence" value="ECO:0007669"/>
    <property type="project" value="UniProtKB-UniRule"/>
</dbReference>
<dbReference type="Gene3D" id="1.20.58.110">
    <property type="entry name" value="Ribosomal protein S20"/>
    <property type="match status" value="1"/>
</dbReference>
<dbReference type="HAMAP" id="MF_00500">
    <property type="entry name" value="Ribosomal_bS20"/>
    <property type="match status" value="1"/>
</dbReference>
<dbReference type="InterPro" id="IPR002583">
    <property type="entry name" value="Ribosomal_bS20"/>
</dbReference>
<dbReference type="InterPro" id="IPR036510">
    <property type="entry name" value="Ribosomal_bS20_sf"/>
</dbReference>
<dbReference type="NCBIfam" id="TIGR00029">
    <property type="entry name" value="S20"/>
    <property type="match status" value="1"/>
</dbReference>
<dbReference type="PANTHER" id="PTHR33398">
    <property type="entry name" value="30S RIBOSOMAL PROTEIN S20"/>
    <property type="match status" value="1"/>
</dbReference>
<dbReference type="PANTHER" id="PTHR33398:SF1">
    <property type="entry name" value="SMALL RIBOSOMAL SUBUNIT PROTEIN BS20C"/>
    <property type="match status" value="1"/>
</dbReference>
<dbReference type="Pfam" id="PF01649">
    <property type="entry name" value="Ribosomal_S20p"/>
    <property type="match status" value="1"/>
</dbReference>
<dbReference type="SUPFAM" id="SSF46992">
    <property type="entry name" value="Ribosomal protein S20"/>
    <property type="match status" value="1"/>
</dbReference>
<protein>
    <recommendedName>
        <fullName evidence="1">Small ribosomal subunit protein bS20</fullName>
    </recommendedName>
    <alternativeName>
        <fullName evidence="2">30S ribosomal protein S20</fullName>
    </alternativeName>
</protein>
<comment type="function">
    <text evidence="1">Binds directly to 16S ribosomal RNA.</text>
</comment>
<comment type="similarity">
    <text evidence="1">Belongs to the bacterial ribosomal protein bS20 family.</text>
</comment>
<proteinExistence type="inferred from homology"/>
<evidence type="ECO:0000255" key="1">
    <source>
        <dbReference type="HAMAP-Rule" id="MF_00500"/>
    </source>
</evidence>
<evidence type="ECO:0000305" key="2"/>
<reference key="1">
    <citation type="journal article" date="2002" name="DNA Res.">
        <title>Complete genomic sequence of nitrogen-fixing symbiotic bacterium Bradyrhizobium japonicum USDA110.</title>
        <authorList>
            <person name="Kaneko T."/>
            <person name="Nakamura Y."/>
            <person name="Sato S."/>
            <person name="Minamisawa K."/>
            <person name="Uchiumi T."/>
            <person name="Sasamoto S."/>
            <person name="Watanabe A."/>
            <person name="Idesawa K."/>
            <person name="Iriguchi M."/>
            <person name="Kawashima K."/>
            <person name="Kohara M."/>
            <person name="Matsumoto M."/>
            <person name="Shimpo S."/>
            <person name="Tsuruoka H."/>
            <person name="Wada T."/>
            <person name="Yamada M."/>
            <person name="Tabata S."/>
        </authorList>
    </citation>
    <scope>NUCLEOTIDE SEQUENCE [LARGE SCALE GENOMIC DNA]</scope>
    <source>
        <strain>JCM 10833 / BCRC 13528 / IAM 13628 / NBRC 14792 / USDA 110</strain>
    </source>
</reference>
<accession>Q89W61</accession>
<sequence length="88" mass="9593">MANTTSAKKATRKIARRTAVNKSRRTQMRGAVRNVEEAIKTGDRAAAVKALANAEPALMRAAQRNIIHKNNASRKVSRLTAQIAKLAK</sequence>
<organism>
    <name type="scientific">Bradyrhizobium diazoefficiens (strain JCM 10833 / BCRC 13528 / IAM 13628 / NBRC 14792 / USDA 110)</name>
    <dbReference type="NCBI Taxonomy" id="224911"/>
    <lineage>
        <taxon>Bacteria</taxon>
        <taxon>Pseudomonadati</taxon>
        <taxon>Pseudomonadota</taxon>
        <taxon>Alphaproteobacteria</taxon>
        <taxon>Hyphomicrobiales</taxon>
        <taxon>Nitrobacteraceae</taxon>
        <taxon>Bradyrhizobium</taxon>
    </lineage>
</organism>